<keyword id="KW-0066">ATP synthesis</keyword>
<keyword id="KW-0067">ATP-binding</keyword>
<keyword id="KW-0139">CF(1)</keyword>
<keyword id="KW-0903">Direct protein sequencing</keyword>
<keyword id="KW-0375">Hydrogen ion transport</keyword>
<keyword id="KW-0406">Ion transport</keyword>
<keyword id="KW-0472">Membrane</keyword>
<keyword id="KW-0496">Mitochondrion</keyword>
<keyword id="KW-0999">Mitochondrion inner membrane</keyword>
<keyword id="KW-0547">Nucleotide-binding</keyword>
<keyword id="KW-1278">Translocase</keyword>
<keyword id="KW-0813">Transport</keyword>
<protein>
    <recommendedName>
        <fullName>ATP synthase subunit beta, mitochondrial</fullName>
        <ecNumber>7.1.2.2</ecNumber>
    </recommendedName>
</protein>
<evidence type="ECO:0000255" key="1">
    <source>
        <dbReference type="PROSITE-ProRule" id="PRU10106"/>
    </source>
</evidence>
<evidence type="ECO:0000305" key="2"/>
<organism>
    <name type="scientific">Pinus pinaster</name>
    <name type="common">Maritime pine</name>
    <dbReference type="NCBI Taxonomy" id="71647"/>
    <lineage>
        <taxon>Eukaryota</taxon>
        <taxon>Viridiplantae</taxon>
        <taxon>Streptophyta</taxon>
        <taxon>Embryophyta</taxon>
        <taxon>Tracheophyta</taxon>
        <taxon>Spermatophyta</taxon>
        <taxon>Pinopsida</taxon>
        <taxon>Pinidae</taxon>
        <taxon>Conifers I</taxon>
        <taxon>Pinales</taxon>
        <taxon>Pinaceae</taxon>
        <taxon>Pinus</taxon>
        <taxon>Pinus subgen. Pinus</taxon>
    </lineage>
</organism>
<feature type="chain" id="PRO_0000144555" description="ATP synthase subunit beta, mitochondrial">
    <location>
        <begin position="1" status="less than"/>
        <end position="15" status="greater than"/>
    </location>
</feature>
<feature type="non-terminal residue">
    <location>
        <position position="1"/>
    </location>
</feature>
<feature type="non-terminal residue">
    <location>
        <position position="15"/>
    </location>
</feature>
<proteinExistence type="evidence at protein level"/>
<name>ATPBM_PINPS</name>
<comment type="function">
    <text>Mitochondrial membrane ATP synthase (F(1)F(0) ATP synthase or Complex V) produces ATP from ADP in the presence of a proton gradient across the membrane which is generated by electron transport complexes of the respiratory chain. F-type ATPases consist of two structural domains, F(1) - containing the extramembraneous catalytic core, and F(0) - containing the membrane proton channel, linked together by a central stalk and a peripheral stalk. During catalysis, ATP synthesis in the catalytic domain of F(1) is coupled via a rotary mechanism of the central stalk subunits to proton translocation. Subunits alpha and beta form the catalytic core in F(1). Rotation of the central stalk against the surrounding alpha(3)beta(3) subunits leads to hydrolysis of ATP in three separate catalytic sites on the beta subunits.</text>
</comment>
<comment type="catalytic activity">
    <reaction evidence="1">
        <text>ATP + H2O + 4 H(+)(in) = ADP + phosphate + 5 H(+)(out)</text>
        <dbReference type="Rhea" id="RHEA:57720"/>
        <dbReference type="ChEBI" id="CHEBI:15377"/>
        <dbReference type="ChEBI" id="CHEBI:15378"/>
        <dbReference type="ChEBI" id="CHEBI:30616"/>
        <dbReference type="ChEBI" id="CHEBI:43474"/>
        <dbReference type="ChEBI" id="CHEBI:456216"/>
        <dbReference type="EC" id="7.1.2.2"/>
    </reaction>
</comment>
<comment type="subunit">
    <text>F-type ATPases have 2 components, CF(1) - the catalytic core - and CF(0) - the membrane proton channel. CF(1) has five subunits: alpha(3), beta(3), gamma(1), delta(1), epsilon(1). CF(0) has three main subunits: a, b and c.</text>
</comment>
<comment type="subcellular location">
    <subcellularLocation>
        <location>Mitochondrion</location>
    </subcellularLocation>
    <subcellularLocation>
        <location>Mitochondrion inner membrane</location>
    </subcellularLocation>
    <text>Peripheral membrane protein.</text>
</comment>
<comment type="miscellaneous">
    <text>On the 2D-gel the determined pI of this protein (spot N153) is: 5.5, its MW is: 55 kDa.</text>
</comment>
<comment type="similarity">
    <text evidence="2">Belongs to the ATPase alpha/beta chains family.</text>
</comment>
<dbReference type="EC" id="7.1.2.2"/>
<dbReference type="GO" id="GO:0005743">
    <property type="term" value="C:mitochondrial inner membrane"/>
    <property type="evidence" value="ECO:0007669"/>
    <property type="project" value="UniProtKB-SubCell"/>
</dbReference>
<dbReference type="GO" id="GO:0045259">
    <property type="term" value="C:proton-transporting ATP synthase complex"/>
    <property type="evidence" value="ECO:0007669"/>
    <property type="project" value="UniProtKB-KW"/>
</dbReference>
<dbReference type="GO" id="GO:0005524">
    <property type="term" value="F:ATP binding"/>
    <property type="evidence" value="ECO:0007669"/>
    <property type="project" value="UniProtKB-KW"/>
</dbReference>
<dbReference type="GO" id="GO:0006754">
    <property type="term" value="P:ATP biosynthetic process"/>
    <property type="evidence" value="ECO:0007669"/>
    <property type="project" value="UniProtKB-KW"/>
</dbReference>
<dbReference type="GO" id="GO:1902600">
    <property type="term" value="P:proton transmembrane transport"/>
    <property type="evidence" value="ECO:0007669"/>
    <property type="project" value="UniProtKB-KW"/>
</dbReference>
<accession>P81663</accession>
<gene>
    <name type="primary">ATPB</name>
</gene>
<reference key="1">
    <citation type="journal article" date="1999" name="Electrophoresis">
        <title>Separation and characterization of needle and xylem maritime pine proteins.</title>
        <authorList>
            <person name="Costa P."/>
            <person name="Pionneau C."/>
            <person name="Bauw G."/>
            <person name="Dubos C."/>
            <person name="Bahrman N."/>
            <person name="Kremer A."/>
            <person name="Frigerio J.-M."/>
            <person name="Plomion C."/>
        </authorList>
    </citation>
    <scope>PROTEIN SEQUENCE</scope>
    <source>
        <tissue>Needle</tissue>
    </source>
</reference>
<sequence length="15" mass="1629">ESIASFQGVLDGKYD</sequence>